<reference key="1">
    <citation type="journal article" date="2005" name="Nat. Biotechnol.">
        <title>Complete genome sequence of the plant commensal Pseudomonas fluorescens Pf-5.</title>
        <authorList>
            <person name="Paulsen I.T."/>
            <person name="Press C.M."/>
            <person name="Ravel J."/>
            <person name="Kobayashi D.Y."/>
            <person name="Myers G.S.A."/>
            <person name="Mavrodi D.V."/>
            <person name="DeBoy R.T."/>
            <person name="Seshadri R."/>
            <person name="Ren Q."/>
            <person name="Madupu R."/>
            <person name="Dodson R.J."/>
            <person name="Durkin A.S."/>
            <person name="Brinkac L.M."/>
            <person name="Daugherty S.C."/>
            <person name="Sullivan S.A."/>
            <person name="Rosovitz M.J."/>
            <person name="Gwinn M.L."/>
            <person name="Zhou L."/>
            <person name="Schneider D.J."/>
            <person name="Cartinhour S.W."/>
            <person name="Nelson W.C."/>
            <person name="Weidman J."/>
            <person name="Watkins K."/>
            <person name="Tran K."/>
            <person name="Khouri H."/>
            <person name="Pierson E.A."/>
            <person name="Pierson L.S. III"/>
            <person name="Thomashow L.S."/>
            <person name="Loper J.E."/>
        </authorList>
    </citation>
    <scope>NUCLEOTIDE SEQUENCE [LARGE SCALE GENOMIC DNA]</scope>
    <source>
        <strain>ATCC BAA-477 / NRRL B-23932 / Pf-5</strain>
    </source>
</reference>
<protein>
    <recommendedName>
        <fullName evidence="1">Glycine--tRNA ligase beta subunit</fullName>
        <ecNumber evidence="1">6.1.1.14</ecNumber>
    </recommendedName>
    <alternativeName>
        <fullName evidence="1">Glycyl-tRNA synthetase beta subunit</fullName>
        <shortName evidence="1">GlyRS</shortName>
    </alternativeName>
</protein>
<name>SYGB_PSEF5</name>
<dbReference type="EC" id="6.1.1.14" evidence="1"/>
<dbReference type="EMBL" id="CP000076">
    <property type="protein sequence ID" value="AAY95431.1"/>
    <property type="molecule type" value="Genomic_DNA"/>
</dbReference>
<dbReference type="RefSeq" id="WP_011058403.1">
    <property type="nucleotide sequence ID" value="NC_004129.6"/>
</dbReference>
<dbReference type="SMR" id="Q4KKR8"/>
<dbReference type="STRING" id="220664.PFL_0013"/>
<dbReference type="KEGG" id="pfl:PFL_0013"/>
<dbReference type="PATRIC" id="fig|220664.5.peg.13"/>
<dbReference type="eggNOG" id="COG0751">
    <property type="taxonomic scope" value="Bacteria"/>
</dbReference>
<dbReference type="HOGENOM" id="CLU_007220_2_2_6"/>
<dbReference type="Proteomes" id="UP000008540">
    <property type="component" value="Chromosome"/>
</dbReference>
<dbReference type="GO" id="GO:0005829">
    <property type="term" value="C:cytosol"/>
    <property type="evidence" value="ECO:0007669"/>
    <property type="project" value="TreeGrafter"/>
</dbReference>
<dbReference type="GO" id="GO:0004814">
    <property type="term" value="F:arginine-tRNA ligase activity"/>
    <property type="evidence" value="ECO:0007669"/>
    <property type="project" value="InterPro"/>
</dbReference>
<dbReference type="GO" id="GO:0005524">
    <property type="term" value="F:ATP binding"/>
    <property type="evidence" value="ECO:0007669"/>
    <property type="project" value="UniProtKB-UniRule"/>
</dbReference>
<dbReference type="GO" id="GO:0004820">
    <property type="term" value="F:glycine-tRNA ligase activity"/>
    <property type="evidence" value="ECO:0007669"/>
    <property type="project" value="UniProtKB-UniRule"/>
</dbReference>
<dbReference type="GO" id="GO:0006420">
    <property type="term" value="P:arginyl-tRNA aminoacylation"/>
    <property type="evidence" value="ECO:0007669"/>
    <property type="project" value="InterPro"/>
</dbReference>
<dbReference type="GO" id="GO:0006426">
    <property type="term" value="P:glycyl-tRNA aminoacylation"/>
    <property type="evidence" value="ECO:0007669"/>
    <property type="project" value="UniProtKB-UniRule"/>
</dbReference>
<dbReference type="HAMAP" id="MF_00255">
    <property type="entry name" value="Gly_tRNA_synth_beta"/>
    <property type="match status" value="1"/>
</dbReference>
<dbReference type="InterPro" id="IPR008909">
    <property type="entry name" value="DALR_anticod-bd"/>
</dbReference>
<dbReference type="InterPro" id="IPR015944">
    <property type="entry name" value="Gly-tRNA-synth_bsu"/>
</dbReference>
<dbReference type="InterPro" id="IPR006194">
    <property type="entry name" value="Gly-tRNA-synth_heterodimer"/>
</dbReference>
<dbReference type="NCBIfam" id="TIGR00211">
    <property type="entry name" value="glyS"/>
    <property type="match status" value="1"/>
</dbReference>
<dbReference type="PANTHER" id="PTHR30075:SF2">
    <property type="entry name" value="GLYCINE--TRNA LIGASE, CHLOROPLASTIC_MITOCHONDRIAL 2"/>
    <property type="match status" value="1"/>
</dbReference>
<dbReference type="PANTHER" id="PTHR30075">
    <property type="entry name" value="GLYCYL-TRNA SYNTHETASE"/>
    <property type="match status" value="1"/>
</dbReference>
<dbReference type="Pfam" id="PF05746">
    <property type="entry name" value="DALR_1"/>
    <property type="match status" value="1"/>
</dbReference>
<dbReference type="Pfam" id="PF02092">
    <property type="entry name" value="tRNA_synt_2f"/>
    <property type="match status" value="1"/>
</dbReference>
<dbReference type="PRINTS" id="PR01045">
    <property type="entry name" value="TRNASYNTHGB"/>
</dbReference>
<dbReference type="SUPFAM" id="SSF109604">
    <property type="entry name" value="HD-domain/PDEase-like"/>
    <property type="match status" value="1"/>
</dbReference>
<dbReference type="PROSITE" id="PS50861">
    <property type="entry name" value="AA_TRNA_LIGASE_II_GLYAB"/>
    <property type="match status" value="1"/>
</dbReference>
<keyword id="KW-0030">Aminoacyl-tRNA synthetase</keyword>
<keyword id="KW-0067">ATP-binding</keyword>
<keyword id="KW-0963">Cytoplasm</keyword>
<keyword id="KW-0436">Ligase</keyword>
<keyword id="KW-0547">Nucleotide-binding</keyword>
<keyword id="KW-0648">Protein biosynthesis</keyword>
<organism>
    <name type="scientific">Pseudomonas fluorescens (strain ATCC BAA-477 / NRRL B-23932 / Pf-5)</name>
    <dbReference type="NCBI Taxonomy" id="220664"/>
    <lineage>
        <taxon>Bacteria</taxon>
        <taxon>Pseudomonadati</taxon>
        <taxon>Pseudomonadota</taxon>
        <taxon>Gammaproteobacteria</taxon>
        <taxon>Pseudomonadales</taxon>
        <taxon>Pseudomonadaceae</taxon>
        <taxon>Pseudomonas</taxon>
    </lineage>
</organism>
<evidence type="ECO:0000255" key="1">
    <source>
        <dbReference type="HAMAP-Rule" id="MF_00255"/>
    </source>
</evidence>
<feature type="chain" id="PRO_1000006389" description="Glycine--tRNA ligase beta subunit">
    <location>
        <begin position="1"/>
        <end position="684"/>
    </location>
</feature>
<gene>
    <name evidence="1" type="primary">glyS</name>
    <name type="ordered locus">PFL_0013</name>
</gene>
<sequence length="684" mass="75043">MSAQDFLVELGTEELPPKALNTLAEAFLAGIEKGLQSAGLSFQAKHVYAAPRRLAVLITQLATQQPDRSINLDGPPRQAAFDAEGNPTQAALGFAKKCGVELSEIDQSGPKLRYSQSIKGKPTASLLPTIVEDSLNDLPIPKRMRWAARKEEFVRPTQWLVMLLGDEVIDCTILAQKAGRDSRGHRFHHPQSVRITAPANYLADLRAAYVLADANERRELISKRTAELATLQEGTAIVPADLLDEVTALVEWPVPLVCSFEERFLEVPQEALITTMQDNQKYFCLLDVDGKLLPRFITVANIESKDPRQIIEGNEKVVRPRLTDAEFFFKQDKKQKLEDFNLRLQNVVFQEKLGSVYDKAERISKLAAFIAPRIGGDAQRAARAGLLSKCDLATEMVGEFPEMQGIAGYYYALNDGEPEDVALALNEQYMPRGAGAELPSTVTGAAVAIADKLDTLVGIFGIGMLPTGSKDPYALRRAALGVLRILIEKKFDLDLNDAVAFAVSAFGSKVKAAGLADQVLEFIFDRLRARYEDEGVDVATYLSVRALKPGSALDFDQRVQAVQAFRKLPEAAALAAVNKRVSNLLSKIEGNVPTTIEAKYFDNANEFSLYSAIQQADQAVQPMAAARQYSETLARLAALREPVDAFFEAVMVNAEDAKVRANRYALLARLRGLFLGVADISVLS</sequence>
<accession>Q4KKR8</accession>
<proteinExistence type="inferred from homology"/>
<comment type="catalytic activity">
    <reaction evidence="1">
        <text>tRNA(Gly) + glycine + ATP = glycyl-tRNA(Gly) + AMP + diphosphate</text>
        <dbReference type="Rhea" id="RHEA:16013"/>
        <dbReference type="Rhea" id="RHEA-COMP:9664"/>
        <dbReference type="Rhea" id="RHEA-COMP:9683"/>
        <dbReference type="ChEBI" id="CHEBI:30616"/>
        <dbReference type="ChEBI" id="CHEBI:33019"/>
        <dbReference type="ChEBI" id="CHEBI:57305"/>
        <dbReference type="ChEBI" id="CHEBI:78442"/>
        <dbReference type="ChEBI" id="CHEBI:78522"/>
        <dbReference type="ChEBI" id="CHEBI:456215"/>
        <dbReference type="EC" id="6.1.1.14"/>
    </reaction>
</comment>
<comment type="subunit">
    <text evidence="1">Tetramer of two alpha and two beta subunits.</text>
</comment>
<comment type="subcellular location">
    <subcellularLocation>
        <location evidence="1">Cytoplasm</location>
    </subcellularLocation>
</comment>
<comment type="similarity">
    <text evidence="1">Belongs to the class-II aminoacyl-tRNA synthetase family.</text>
</comment>